<name>YIHI_MANHA</name>
<dbReference type="EMBL" id="U46781">
    <property type="protein sequence ID" value="AAC44664.1"/>
    <property type="molecule type" value="Genomic_DNA"/>
</dbReference>
<dbReference type="RefSeq" id="WP_006248056.1">
    <property type="nucleotide sequence ID" value="NZ_VAJK01000017.1"/>
</dbReference>
<dbReference type="SMR" id="P95508"/>
<dbReference type="STRING" id="75985.WC39_04945"/>
<dbReference type="GeneID" id="67368647"/>
<dbReference type="OrthoDB" id="5677577at2"/>
<dbReference type="GO" id="GO:0005096">
    <property type="term" value="F:GTPase activator activity"/>
    <property type="evidence" value="ECO:0007669"/>
    <property type="project" value="UniProtKB-KW"/>
</dbReference>
<dbReference type="GO" id="GO:0042254">
    <property type="term" value="P:ribosome biogenesis"/>
    <property type="evidence" value="ECO:0007669"/>
    <property type="project" value="UniProtKB-KW"/>
</dbReference>
<dbReference type="HAMAP" id="MF_01058">
    <property type="entry name" value="GAP_YihI"/>
    <property type="match status" value="1"/>
</dbReference>
<dbReference type="InterPro" id="IPR007336">
    <property type="entry name" value="YihI"/>
</dbReference>
<dbReference type="NCBIfam" id="NF003560">
    <property type="entry name" value="PRK05244.1-1"/>
    <property type="match status" value="1"/>
</dbReference>
<dbReference type="Pfam" id="PF04220">
    <property type="entry name" value="YihI"/>
    <property type="match status" value="1"/>
</dbReference>
<keyword id="KW-0343">GTPase activation</keyword>
<keyword id="KW-0690">Ribosome biogenesis</keyword>
<organism>
    <name type="scientific">Mannheimia haemolytica</name>
    <name type="common">Pasteurella haemolytica</name>
    <dbReference type="NCBI Taxonomy" id="75985"/>
    <lineage>
        <taxon>Bacteria</taxon>
        <taxon>Pseudomonadati</taxon>
        <taxon>Pseudomonadota</taxon>
        <taxon>Gammaproteobacteria</taxon>
        <taxon>Pasteurellales</taxon>
        <taxon>Pasteurellaceae</taxon>
        <taxon>Mannheimia</taxon>
    </lineage>
</organism>
<protein>
    <recommendedName>
        <fullName evidence="1">Der GTPase-activating protein YihI</fullName>
    </recommendedName>
</protein>
<evidence type="ECO:0000255" key="1">
    <source>
        <dbReference type="HAMAP-Rule" id="MF_01058"/>
    </source>
</evidence>
<evidence type="ECO:0000256" key="2">
    <source>
        <dbReference type="SAM" id="MobiDB-lite"/>
    </source>
</evidence>
<proteinExistence type="inferred from homology"/>
<feature type="chain" id="PRO_0000209587" description="Der GTPase-activating protein YihI">
    <location>
        <begin position="1"/>
        <end position="195"/>
    </location>
</feature>
<feature type="region of interest" description="Disordered" evidence="2">
    <location>
        <begin position="1"/>
        <end position="81"/>
    </location>
</feature>
<feature type="compositionally biased region" description="Basic and acidic residues" evidence="2">
    <location>
        <begin position="9"/>
        <end position="23"/>
    </location>
</feature>
<feature type="compositionally biased region" description="Basic and acidic residues" evidence="2">
    <location>
        <begin position="38"/>
        <end position="49"/>
    </location>
</feature>
<feature type="compositionally biased region" description="Basic and acidic residues" evidence="2">
    <location>
        <begin position="66"/>
        <end position="81"/>
    </location>
</feature>
<gene>
    <name evidence="1" type="primary">yihI</name>
</gene>
<reference key="1">
    <citation type="journal article" date="1996" name="Gene">
        <title>The restriction-modification system of Pasteurella haemolytica is a member of a new family of type I enzymes.</title>
        <authorList>
            <person name="Highlander S.K."/>
            <person name="Garza O."/>
        </authorList>
    </citation>
    <scope>NUCLEOTIDE SEQUENCE [GENOMIC DNA]</scope>
    <source>
        <strain>Serotype A1 / PH101</strain>
    </source>
</reference>
<accession>P95508</accession>
<sequence>MSRTKKTRRITDIMPARKTDKPKQPMPKLGGGKNRKLTRYELDAQAREEKRKRKHKGLPTGSRNADPAEQKKAVVKEVKDPRIGSRKKVPLMVEFVNQPEKGRTIKAVPVEPIKPTLSPEQELEQLENNECLNQLLDDLEAGKTLSAEDQKFMNECLDRIDELMTELGIEYEDEEGDNGDALLRQFETMDINKFR</sequence>
<comment type="function">
    <text evidence="1">A GTPase-activating protein (GAP) that modifies Der/EngA GTPase function. May play a role in ribosome biogenesis.</text>
</comment>
<comment type="subunit">
    <text evidence="1">Interacts with Der.</text>
</comment>
<comment type="similarity">
    <text evidence="1">Belongs to the YihI family.</text>
</comment>